<reference key="1">
    <citation type="journal article" date="2001" name="Mol. Biol. Evol.">
        <title>Mechanisms for evolving hypervariability: the case of conopeptides.</title>
        <authorList>
            <person name="Conticello S.G."/>
            <person name="Gilad Y."/>
            <person name="Avidan N."/>
            <person name="Ben-Asher E."/>
            <person name="Levy Z."/>
            <person name="Fainzilber M."/>
        </authorList>
    </citation>
    <scope>NUCLEOTIDE SEQUENCE [MRNA]</scope>
    <source>
        <tissue>Venom duct</tissue>
    </source>
</reference>
<comment type="subcellular location">
    <subcellularLocation>
        <location evidence="1">Secreted</location>
    </subcellularLocation>
</comment>
<comment type="tissue specificity">
    <text>Expressed by the venom duct.</text>
</comment>
<comment type="domain">
    <text evidence="1">The presence of a 'disulfide through disulfide knot' structurally defines this protein as a knottin.</text>
</comment>
<comment type="domain">
    <text>The cysteine framework is VI/VII (C-C-CC-C-C).</text>
</comment>
<comment type="similarity">
    <text evidence="3">Belongs to the conotoxin O3 superfamily.</text>
</comment>
<evidence type="ECO:0000250" key="1"/>
<evidence type="ECO:0000255" key="2"/>
<evidence type="ECO:0000305" key="3"/>
<sequence length="80" mass="8812">MSGLGIMVLTLLLLVSMATSHQDGGGKQATQRDAINVRRRRSITRRVVTEACEEYCEDRDKKTCCGLENGEPFCATLCFG</sequence>
<feature type="signal peptide" evidence="2">
    <location>
        <begin position="1"/>
        <end position="20"/>
    </location>
</feature>
<feature type="propeptide" id="PRO_0000404838" evidence="1">
    <location>
        <begin position="21"/>
        <end position="44"/>
    </location>
</feature>
<feature type="peptide" id="PRO_0000404839" description="Conotoxin VnMSGL-0121">
    <location>
        <begin position="47"/>
        <end position="79"/>
    </location>
</feature>
<feature type="modified residue" description="Phenylalanine amide" evidence="1">
    <location>
        <position position="79"/>
    </location>
</feature>
<feature type="disulfide bond" evidence="1">
    <location>
        <begin position="52"/>
        <end position="65"/>
    </location>
</feature>
<feature type="disulfide bond" evidence="1">
    <location>
        <begin position="56"/>
        <end position="74"/>
    </location>
</feature>
<feature type="disulfide bond" evidence="1">
    <location>
        <begin position="64"/>
        <end position="78"/>
    </location>
</feature>
<protein>
    <recommendedName>
        <fullName>Conotoxin VnMSGL-0121</fullName>
    </recommendedName>
</protein>
<name>O3619_CONVE</name>
<dbReference type="EMBL" id="AF215076">
    <property type="protein sequence ID" value="AAG60504.1"/>
    <property type="molecule type" value="mRNA"/>
</dbReference>
<dbReference type="ConoServer" id="763">
    <property type="toxin name" value="Vn6.19 precursor"/>
</dbReference>
<dbReference type="GO" id="GO:0005576">
    <property type="term" value="C:extracellular region"/>
    <property type="evidence" value="ECO:0007669"/>
    <property type="project" value="UniProtKB-SubCell"/>
</dbReference>
<dbReference type="GO" id="GO:0008200">
    <property type="term" value="F:ion channel inhibitor activity"/>
    <property type="evidence" value="ECO:0007669"/>
    <property type="project" value="InterPro"/>
</dbReference>
<dbReference type="GO" id="GO:0090729">
    <property type="term" value="F:toxin activity"/>
    <property type="evidence" value="ECO:0007669"/>
    <property type="project" value="UniProtKB-KW"/>
</dbReference>
<dbReference type="InterPro" id="IPR004214">
    <property type="entry name" value="Conotoxin"/>
</dbReference>
<dbReference type="Pfam" id="PF02950">
    <property type="entry name" value="Conotoxin"/>
    <property type="match status" value="1"/>
</dbReference>
<accession>Q9BP62</accession>
<organism>
    <name type="scientific">Conus ventricosus</name>
    <name type="common">Mediterranean cone</name>
    <dbReference type="NCBI Taxonomy" id="117992"/>
    <lineage>
        <taxon>Eukaryota</taxon>
        <taxon>Metazoa</taxon>
        <taxon>Spiralia</taxon>
        <taxon>Lophotrochozoa</taxon>
        <taxon>Mollusca</taxon>
        <taxon>Gastropoda</taxon>
        <taxon>Caenogastropoda</taxon>
        <taxon>Neogastropoda</taxon>
        <taxon>Conoidea</taxon>
        <taxon>Conidae</taxon>
        <taxon>Conus</taxon>
        <taxon>Lautoconus</taxon>
    </lineage>
</organism>
<keyword id="KW-0027">Amidation</keyword>
<keyword id="KW-0165">Cleavage on pair of basic residues</keyword>
<keyword id="KW-1015">Disulfide bond</keyword>
<keyword id="KW-0960">Knottin</keyword>
<keyword id="KW-0528">Neurotoxin</keyword>
<keyword id="KW-0964">Secreted</keyword>
<keyword id="KW-0732">Signal</keyword>
<keyword id="KW-0800">Toxin</keyword>
<proteinExistence type="evidence at transcript level"/>